<gene>
    <name evidence="1" type="primary">ilvD</name>
    <name type="ordered locus">PMM0774</name>
</gene>
<name>ILVD_PROMP</name>
<reference key="1">
    <citation type="journal article" date="2003" name="Nature">
        <title>Genome divergence in two Prochlorococcus ecotypes reflects oceanic niche differentiation.</title>
        <authorList>
            <person name="Rocap G."/>
            <person name="Larimer F.W."/>
            <person name="Lamerdin J.E."/>
            <person name="Malfatti S."/>
            <person name="Chain P."/>
            <person name="Ahlgren N.A."/>
            <person name="Arellano A."/>
            <person name="Coleman M."/>
            <person name="Hauser L."/>
            <person name="Hess W.R."/>
            <person name="Johnson Z.I."/>
            <person name="Land M.L."/>
            <person name="Lindell D."/>
            <person name="Post A.F."/>
            <person name="Regala W."/>
            <person name="Shah M."/>
            <person name="Shaw S.L."/>
            <person name="Steglich C."/>
            <person name="Sullivan M.B."/>
            <person name="Ting C.S."/>
            <person name="Tolonen A."/>
            <person name="Webb E.A."/>
            <person name="Zinser E.R."/>
            <person name="Chisholm S.W."/>
        </authorList>
    </citation>
    <scope>NUCLEOTIDE SEQUENCE [LARGE SCALE GENOMIC DNA]</scope>
    <source>
        <strain>CCMP1986 / NIES-2087 / MED4</strain>
    </source>
</reference>
<proteinExistence type="inferred from homology"/>
<keyword id="KW-0001">2Fe-2S</keyword>
<keyword id="KW-0028">Amino-acid biosynthesis</keyword>
<keyword id="KW-0100">Branched-chain amino acid biosynthesis</keyword>
<keyword id="KW-0408">Iron</keyword>
<keyword id="KW-0411">Iron-sulfur</keyword>
<keyword id="KW-0456">Lyase</keyword>
<keyword id="KW-0460">Magnesium</keyword>
<keyword id="KW-0479">Metal-binding</keyword>
<dbReference type="EC" id="4.2.1.9" evidence="1"/>
<dbReference type="EMBL" id="BX548174">
    <property type="protein sequence ID" value="CAE19233.1"/>
    <property type="molecule type" value="Genomic_DNA"/>
</dbReference>
<dbReference type="RefSeq" id="WP_011132408.1">
    <property type="nucleotide sequence ID" value="NC_005072.1"/>
</dbReference>
<dbReference type="SMR" id="Q7V1T1"/>
<dbReference type="STRING" id="59919.PMM0774"/>
<dbReference type="KEGG" id="pmm:PMM0774"/>
<dbReference type="eggNOG" id="COG0129">
    <property type="taxonomic scope" value="Bacteria"/>
</dbReference>
<dbReference type="HOGENOM" id="CLU_014271_4_2_3"/>
<dbReference type="OrthoDB" id="9807077at2"/>
<dbReference type="UniPathway" id="UPA00047">
    <property type="reaction ID" value="UER00057"/>
</dbReference>
<dbReference type="UniPathway" id="UPA00049">
    <property type="reaction ID" value="UER00061"/>
</dbReference>
<dbReference type="Proteomes" id="UP000001026">
    <property type="component" value="Chromosome"/>
</dbReference>
<dbReference type="GO" id="GO:0051537">
    <property type="term" value="F:2 iron, 2 sulfur cluster binding"/>
    <property type="evidence" value="ECO:0007669"/>
    <property type="project" value="UniProtKB-UniRule"/>
</dbReference>
<dbReference type="GO" id="GO:0004160">
    <property type="term" value="F:dihydroxy-acid dehydratase activity"/>
    <property type="evidence" value="ECO:0007669"/>
    <property type="project" value="UniProtKB-UniRule"/>
</dbReference>
<dbReference type="GO" id="GO:0000287">
    <property type="term" value="F:magnesium ion binding"/>
    <property type="evidence" value="ECO:0007669"/>
    <property type="project" value="UniProtKB-UniRule"/>
</dbReference>
<dbReference type="GO" id="GO:0009097">
    <property type="term" value="P:isoleucine biosynthetic process"/>
    <property type="evidence" value="ECO:0007669"/>
    <property type="project" value="UniProtKB-UniRule"/>
</dbReference>
<dbReference type="GO" id="GO:0009099">
    <property type="term" value="P:L-valine biosynthetic process"/>
    <property type="evidence" value="ECO:0007669"/>
    <property type="project" value="UniProtKB-UniRule"/>
</dbReference>
<dbReference type="FunFam" id="3.50.30.80:FF:000001">
    <property type="entry name" value="Dihydroxy-acid dehydratase"/>
    <property type="match status" value="1"/>
</dbReference>
<dbReference type="Gene3D" id="3.50.30.80">
    <property type="entry name" value="IlvD/EDD C-terminal domain-like"/>
    <property type="match status" value="1"/>
</dbReference>
<dbReference type="HAMAP" id="MF_00012">
    <property type="entry name" value="IlvD"/>
    <property type="match status" value="1"/>
</dbReference>
<dbReference type="InterPro" id="IPR050165">
    <property type="entry name" value="DHAD_IlvD/Edd"/>
</dbReference>
<dbReference type="InterPro" id="IPR042096">
    <property type="entry name" value="Dihydro-acid_dehy_C"/>
</dbReference>
<dbReference type="InterPro" id="IPR004404">
    <property type="entry name" value="DihydroxyA_deHydtase"/>
</dbReference>
<dbReference type="InterPro" id="IPR020558">
    <property type="entry name" value="DiOHA_6PGluconate_deHydtase_CS"/>
</dbReference>
<dbReference type="InterPro" id="IPR056740">
    <property type="entry name" value="ILV_EDD_C"/>
</dbReference>
<dbReference type="InterPro" id="IPR000581">
    <property type="entry name" value="ILV_EDD_N"/>
</dbReference>
<dbReference type="InterPro" id="IPR037237">
    <property type="entry name" value="IlvD/EDD_N"/>
</dbReference>
<dbReference type="NCBIfam" id="TIGR00110">
    <property type="entry name" value="ilvD"/>
    <property type="match status" value="1"/>
</dbReference>
<dbReference type="NCBIfam" id="NF002068">
    <property type="entry name" value="PRK00911.1"/>
    <property type="match status" value="1"/>
</dbReference>
<dbReference type="PANTHER" id="PTHR21000">
    <property type="entry name" value="DIHYDROXY-ACID DEHYDRATASE DAD"/>
    <property type="match status" value="1"/>
</dbReference>
<dbReference type="PANTHER" id="PTHR21000:SF5">
    <property type="entry name" value="DIHYDROXY-ACID DEHYDRATASE, MITOCHONDRIAL"/>
    <property type="match status" value="1"/>
</dbReference>
<dbReference type="Pfam" id="PF24877">
    <property type="entry name" value="ILV_EDD_C"/>
    <property type="match status" value="1"/>
</dbReference>
<dbReference type="Pfam" id="PF00920">
    <property type="entry name" value="ILVD_EDD_N"/>
    <property type="match status" value="1"/>
</dbReference>
<dbReference type="SUPFAM" id="SSF143975">
    <property type="entry name" value="IlvD/EDD N-terminal domain-like"/>
    <property type="match status" value="1"/>
</dbReference>
<dbReference type="SUPFAM" id="SSF52016">
    <property type="entry name" value="LeuD/IlvD-like"/>
    <property type="match status" value="1"/>
</dbReference>
<dbReference type="PROSITE" id="PS00886">
    <property type="entry name" value="ILVD_EDD_1"/>
    <property type="match status" value="1"/>
</dbReference>
<dbReference type="PROSITE" id="PS00887">
    <property type="entry name" value="ILVD_EDD_2"/>
    <property type="match status" value="1"/>
</dbReference>
<accession>Q7V1T1</accession>
<protein>
    <recommendedName>
        <fullName evidence="1">Dihydroxy-acid dehydratase</fullName>
        <shortName evidence="1">DAD</shortName>
        <ecNumber evidence="1">4.2.1.9</ecNumber>
    </recommendedName>
</protein>
<comment type="function">
    <text evidence="1">Functions in the biosynthesis of branched-chain amino acids. Catalyzes the dehydration of (2R,3R)-2,3-dihydroxy-3-methylpentanoate (2,3-dihydroxy-3-methylvalerate) into 2-oxo-3-methylpentanoate (2-oxo-3-methylvalerate) and of (2R)-2,3-dihydroxy-3-methylbutanoate (2,3-dihydroxyisovalerate) into 2-oxo-3-methylbutanoate (2-oxoisovalerate), the penultimate precursor to L-isoleucine and L-valine, respectively.</text>
</comment>
<comment type="catalytic activity">
    <reaction evidence="1">
        <text>(2R)-2,3-dihydroxy-3-methylbutanoate = 3-methyl-2-oxobutanoate + H2O</text>
        <dbReference type="Rhea" id="RHEA:24809"/>
        <dbReference type="ChEBI" id="CHEBI:11851"/>
        <dbReference type="ChEBI" id="CHEBI:15377"/>
        <dbReference type="ChEBI" id="CHEBI:49072"/>
        <dbReference type="EC" id="4.2.1.9"/>
    </reaction>
    <physiologicalReaction direction="left-to-right" evidence="1">
        <dbReference type="Rhea" id="RHEA:24810"/>
    </physiologicalReaction>
</comment>
<comment type="catalytic activity">
    <reaction evidence="1">
        <text>(2R,3R)-2,3-dihydroxy-3-methylpentanoate = (S)-3-methyl-2-oxopentanoate + H2O</text>
        <dbReference type="Rhea" id="RHEA:27694"/>
        <dbReference type="ChEBI" id="CHEBI:15377"/>
        <dbReference type="ChEBI" id="CHEBI:35146"/>
        <dbReference type="ChEBI" id="CHEBI:49258"/>
        <dbReference type="EC" id="4.2.1.9"/>
    </reaction>
    <physiologicalReaction direction="left-to-right" evidence="1">
        <dbReference type="Rhea" id="RHEA:27695"/>
    </physiologicalReaction>
</comment>
<comment type="cofactor">
    <cofactor evidence="1">
        <name>[2Fe-2S] cluster</name>
        <dbReference type="ChEBI" id="CHEBI:190135"/>
    </cofactor>
    <text evidence="1">Binds 1 [2Fe-2S] cluster per subunit. This cluster acts as a Lewis acid cofactor.</text>
</comment>
<comment type="cofactor">
    <cofactor evidence="1">
        <name>Mg(2+)</name>
        <dbReference type="ChEBI" id="CHEBI:18420"/>
    </cofactor>
</comment>
<comment type="pathway">
    <text evidence="1">Amino-acid biosynthesis; L-isoleucine biosynthesis; L-isoleucine from 2-oxobutanoate: step 3/4.</text>
</comment>
<comment type="pathway">
    <text evidence="1">Amino-acid biosynthesis; L-valine biosynthesis; L-valine from pyruvate: step 3/4.</text>
</comment>
<comment type="subunit">
    <text evidence="1">Homodimer.</text>
</comment>
<comment type="similarity">
    <text evidence="1">Belongs to the IlvD/Edd family.</text>
</comment>
<feature type="chain" id="PRO_0000103491" description="Dihydroxy-acid dehydratase">
    <location>
        <begin position="1"/>
        <end position="559"/>
    </location>
</feature>
<feature type="active site" description="Proton acceptor" evidence="1">
    <location>
        <position position="472"/>
    </location>
</feature>
<feature type="binding site" evidence="1">
    <location>
        <position position="49"/>
    </location>
    <ligand>
        <name>[2Fe-2S] cluster</name>
        <dbReference type="ChEBI" id="CHEBI:190135"/>
    </ligand>
</feature>
<feature type="binding site" evidence="1">
    <location>
        <position position="81"/>
    </location>
    <ligand>
        <name>Mg(2+)</name>
        <dbReference type="ChEBI" id="CHEBI:18420"/>
    </ligand>
</feature>
<feature type="binding site" evidence="1">
    <location>
        <position position="122"/>
    </location>
    <ligand>
        <name>[2Fe-2S] cluster</name>
        <dbReference type="ChEBI" id="CHEBI:190135"/>
    </ligand>
</feature>
<feature type="binding site" evidence="1">
    <location>
        <position position="123"/>
    </location>
    <ligand>
        <name>Mg(2+)</name>
        <dbReference type="ChEBI" id="CHEBI:18420"/>
    </ligand>
</feature>
<feature type="binding site" description="via carbamate group" evidence="1">
    <location>
        <position position="124"/>
    </location>
    <ligand>
        <name>Mg(2+)</name>
        <dbReference type="ChEBI" id="CHEBI:18420"/>
    </ligand>
</feature>
<feature type="binding site" evidence="1">
    <location>
        <position position="194"/>
    </location>
    <ligand>
        <name>[2Fe-2S] cluster</name>
        <dbReference type="ChEBI" id="CHEBI:190135"/>
    </ligand>
</feature>
<feature type="binding site" evidence="1">
    <location>
        <position position="446"/>
    </location>
    <ligand>
        <name>Mg(2+)</name>
        <dbReference type="ChEBI" id="CHEBI:18420"/>
    </ligand>
</feature>
<feature type="modified residue" description="N6-carboxylysine" evidence="1">
    <location>
        <position position="124"/>
    </location>
</feature>
<organism>
    <name type="scientific">Prochlorococcus marinus subsp. pastoris (strain CCMP1986 / NIES-2087 / MED4)</name>
    <dbReference type="NCBI Taxonomy" id="59919"/>
    <lineage>
        <taxon>Bacteria</taxon>
        <taxon>Bacillati</taxon>
        <taxon>Cyanobacteriota</taxon>
        <taxon>Cyanophyceae</taxon>
        <taxon>Synechococcales</taxon>
        <taxon>Prochlorococcaceae</taxon>
        <taxon>Prochlorococcus</taxon>
    </lineage>
</organism>
<sequence length="559" mass="59461">MNKLRSSAITQGVQRSPNRSMLRAVGFSDEDFTKPIIGVANGFSTITPCNMGLNKLALKAEESIREAGGMPQMFGTITVSDGISMGTEGMKYSLVSREVIADSIETACNAQSMDGVLAIGGCDKNMPGAMIAIARMNIPSIFIYGGTIKPGKLNGEDLTVVSAFEAVGQLTSGKINEKRLIEVEKNCIPGAGSCGGMFTANTMSAVIEVLGLSLPYSSTMAAEDYEKEVSAEKSAEILVDAIRKDIRPLTLMTKESFENAITVIMAIGGSTNAVLHILAIANTAGIDINIDDFERIRQKVPVICDLKPSGKYVTVDLHKAGGIPQVMKILLNTGLIHGNCRNIEGKTVVESLKDIPVKPPENQDVIRDIDNPLYKKGHLAILKGNLASEGCVAKISGIKNPVLKGPARIFESEEDCLKSILNNDIKAGNVVVIRNEGPVGGPGMREMLAPTSAIVGQGLGEKVALITDGRFSGGTYGLVVGHIAPEAAVGGNIALIKEGDLITVDATNQLIEVELSDEELEMRRINWEKPSKKYKKGVLSKYSRIVSTSSLGAVTDLEE</sequence>
<evidence type="ECO:0000255" key="1">
    <source>
        <dbReference type="HAMAP-Rule" id="MF_00012"/>
    </source>
</evidence>